<accession>Q00993</accession>
<accession>Q80YQ3</accession>
<proteinExistence type="evidence at protein level"/>
<evidence type="ECO:0000250" key="1"/>
<evidence type="ECO:0000250" key="2">
    <source>
        <dbReference type="UniProtKB" id="P30530"/>
    </source>
</evidence>
<evidence type="ECO:0000255" key="3"/>
<evidence type="ECO:0000255" key="4">
    <source>
        <dbReference type="PROSITE-ProRule" id="PRU00114"/>
    </source>
</evidence>
<evidence type="ECO:0000255" key="5">
    <source>
        <dbReference type="PROSITE-ProRule" id="PRU00159"/>
    </source>
</evidence>
<evidence type="ECO:0000255" key="6">
    <source>
        <dbReference type="PROSITE-ProRule" id="PRU00316"/>
    </source>
</evidence>
<evidence type="ECO:0000255" key="7">
    <source>
        <dbReference type="PROSITE-ProRule" id="PRU10028"/>
    </source>
</evidence>
<evidence type="ECO:0000256" key="8">
    <source>
        <dbReference type="SAM" id="MobiDB-lite"/>
    </source>
</evidence>
<evidence type="ECO:0000269" key="9">
    <source>
    </source>
</evidence>
<evidence type="ECO:0000269" key="10">
    <source>
    </source>
</evidence>
<evidence type="ECO:0000305" key="11"/>
<feature type="signal peptide" evidence="3">
    <location>
        <begin position="1"/>
        <end position="18"/>
    </location>
</feature>
<feature type="chain" id="PRO_0000024482" description="Tyrosine-protein kinase receptor UFO">
    <location>
        <begin position="19"/>
        <end position="888"/>
    </location>
</feature>
<feature type="topological domain" description="Extracellular" evidence="3">
    <location>
        <begin position="19"/>
        <end position="445"/>
    </location>
</feature>
<feature type="transmembrane region" description="Helical" evidence="3">
    <location>
        <begin position="446"/>
        <end position="466"/>
    </location>
</feature>
<feature type="topological domain" description="Cytoplasmic" evidence="3">
    <location>
        <begin position="467"/>
        <end position="888"/>
    </location>
</feature>
<feature type="domain" description="Ig-like C2-type 1">
    <location>
        <begin position="30"/>
        <end position="122"/>
    </location>
</feature>
<feature type="domain" description="Ig-like C2-type 2">
    <location>
        <begin position="133"/>
        <end position="216"/>
    </location>
</feature>
<feature type="domain" description="Fibronectin type-III 1" evidence="6">
    <location>
        <begin position="221"/>
        <end position="325"/>
    </location>
</feature>
<feature type="domain" description="Fibronectin type-III 2" evidence="6">
    <location>
        <begin position="330"/>
        <end position="422"/>
    </location>
</feature>
<feature type="domain" description="Protein kinase" evidence="5">
    <location>
        <begin position="530"/>
        <end position="801"/>
    </location>
</feature>
<feature type="region of interest" description="Interaction with GAS6" evidence="1">
    <location>
        <begin position="19"/>
        <end position="86"/>
    </location>
</feature>
<feature type="region of interest" description="Disordered" evidence="8">
    <location>
        <begin position="820"/>
        <end position="846"/>
    </location>
</feature>
<feature type="region of interest" description="Disordered" evidence="8">
    <location>
        <begin position="865"/>
        <end position="888"/>
    </location>
</feature>
<feature type="active site" description="Proton acceptor" evidence="5 7">
    <location>
        <position position="666"/>
    </location>
</feature>
<feature type="binding site" evidence="5">
    <location>
        <begin position="536"/>
        <end position="544"/>
    </location>
    <ligand>
        <name>ATP</name>
        <dbReference type="ChEBI" id="CHEBI:30616"/>
    </ligand>
</feature>
<feature type="binding site" evidence="5">
    <location>
        <position position="561"/>
    </location>
    <ligand>
        <name>ATP</name>
        <dbReference type="ChEBI" id="CHEBI:30616"/>
    </ligand>
</feature>
<feature type="modified residue" description="Phosphotyrosine; by autocatalysis" evidence="1">
    <location>
        <position position="697"/>
    </location>
</feature>
<feature type="modified residue" description="Phosphotyrosine; by autocatalysis" evidence="2">
    <location>
        <position position="773"/>
    </location>
</feature>
<feature type="modified residue" description="Phosphotyrosine; by autocatalysis" evidence="2">
    <location>
        <position position="815"/>
    </location>
</feature>
<feature type="modified residue" description="Phosphotyrosine; by autocatalysis" evidence="2">
    <location>
        <position position="860"/>
    </location>
</feature>
<feature type="glycosylation site" description="N-linked (GlcNAc...) asparagine" evidence="3">
    <location>
        <position position="37"/>
    </location>
</feature>
<feature type="glycosylation site" description="N-linked (GlcNAc...) asparagine" evidence="3">
    <location>
        <position position="151"/>
    </location>
</feature>
<feature type="glycosylation site" description="N-linked (GlcNAc...) asparagine" evidence="3">
    <location>
        <position position="192"/>
    </location>
</feature>
<feature type="glycosylation site" description="N-linked (GlcNAc...) asparagine" evidence="3">
    <location>
        <position position="333"/>
    </location>
</feature>
<feature type="glycosylation site" description="N-linked (GlcNAc...) asparagine" evidence="3">
    <location>
        <position position="339"/>
    </location>
</feature>
<feature type="glycosylation site" description="N-linked (GlcNAc...) asparagine" evidence="3">
    <location>
        <position position="395"/>
    </location>
</feature>
<feature type="disulfide bond" evidence="4">
    <location>
        <begin position="50"/>
        <end position="111"/>
    </location>
</feature>
<feature type="disulfide bond" evidence="4">
    <location>
        <begin position="154"/>
        <end position="199"/>
    </location>
</feature>
<feature type="sequence conflict" description="In Ref. 2; CAA42158." evidence="11" ref="2">
    <original>A</original>
    <variation>R</variation>
    <location>
        <position position="394"/>
    </location>
</feature>
<feature type="sequence conflict" description="In Ref. 2; CAA42158." evidence="11" ref="2">
    <original>G</original>
    <variation>P</variation>
    <location>
        <position position="486"/>
    </location>
</feature>
<feature type="sequence conflict" description="In Ref. 2; CAA42158." evidence="11" ref="2">
    <original>A</original>
    <variation>V</variation>
    <location>
        <position position="566"/>
    </location>
</feature>
<feature type="sequence conflict" description="In Ref. 1; CAA45097." evidence="11" ref="1">
    <original>C</original>
    <variation>F</variation>
    <location>
        <position position="768"/>
    </location>
</feature>
<feature type="sequence conflict" description="In Ref. 1; CAA45097." evidence="11" ref="1">
    <original>A</original>
    <variation>S</variation>
    <location>
        <position position="774"/>
    </location>
</feature>
<organism>
    <name type="scientific">Mus musculus</name>
    <name type="common">Mouse</name>
    <dbReference type="NCBI Taxonomy" id="10090"/>
    <lineage>
        <taxon>Eukaryota</taxon>
        <taxon>Metazoa</taxon>
        <taxon>Chordata</taxon>
        <taxon>Craniata</taxon>
        <taxon>Vertebrata</taxon>
        <taxon>Euteleostomi</taxon>
        <taxon>Mammalia</taxon>
        <taxon>Eutheria</taxon>
        <taxon>Euarchontoglires</taxon>
        <taxon>Glires</taxon>
        <taxon>Rodentia</taxon>
        <taxon>Myomorpha</taxon>
        <taxon>Muroidea</taxon>
        <taxon>Muridae</taxon>
        <taxon>Murinae</taxon>
        <taxon>Mus</taxon>
        <taxon>Mus</taxon>
    </lineage>
</organism>
<gene>
    <name type="primary">Axl</name>
    <name type="synonym">Ark</name>
    <name type="synonym">Ufo</name>
</gene>
<reference key="1">
    <citation type="journal article" date="1992" name="Oncogene">
        <title>The murine ufo receptor: molecular cloning, chromosomal localization and in situ expression analysis.</title>
        <authorList>
            <person name="Faust M."/>
            <person name="Ebensperger C."/>
            <person name="Schulz A.S."/>
            <person name="Schleithoff L."/>
            <person name="Hameister H."/>
            <person name="Bartram C.R."/>
            <person name="Janssen J.W.G."/>
        </authorList>
    </citation>
    <scope>NUCLEOTIDE SEQUENCE [MRNA]</scope>
    <source>
        <strain>CD-1</strain>
        <tissue>Heart</tissue>
    </source>
</reference>
<reference key="2">
    <citation type="journal article" date="1991" name="Oncogene">
        <title>A putative receptor tyrosine kinase with unique structural topology.</title>
        <authorList>
            <person name="Rescigno J."/>
            <person name="Mansukhani A."/>
            <person name="Basilico C."/>
        </authorList>
    </citation>
    <scope>NUCLEOTIDE SEQUENCE [GENOMIC DNA]</scope>
</reference>
<reference key="3">
    <citation type="journal article" date="2005" name="Science">
        <title>The transcriptional landscape of the mammalian genome.</title>
        <authorList>
            <person name="Carninci P."/>
            <person name="Kasukawa T."/>
            <person name="Katayama S."/>
            <person name="Gough J."/>
            <person name="Frith M.C."/>
            <person name="Maeda N."/>
            <person name="Oyama R."/>
            <person name="Ravasi T."/>
            <person name="Lenhard B."/>
            <person name="Wells C."/>
            <person name="Kodzius R."/>
            <person name="Shimokawa K."/>
            <person name="Bajic V.B."/>
            <person name="Brenner S.E."/>
            <person name="Batalov S."/>
            <person name="Forrest A.R."/>
            <person name="Zavolan M."/>
            <person name="Davis M.J."/>
            <person name="Wilming L.G."/>
            <person name="Aidinis V."/>
            <person name="Allen J.E."/>
            <person name="Ambesi-Impiombato A."/>
            <person name="Apweiler R."/>
            <person name="Aturaliya R.N."/>
            <person name="Bailey T.L."/>
            <person name="Bansal M."/>
            <person name="Baxter L."/>
            <person name="Beisel K.W."/>
            <person name="Bersano T."/>
            <person name="Bono H."/>
            <person name="Chalk A.M."/>
            <person name="Chiu K.P."/>
            <person name="Choudhary V."/>
            <person name="Christoffels A."/>
            <person name="Clutterbuck D.R."/>
            <person name="Crowe M.L."/>
            <person name="Dalla E."/>
            <person name="Dalrymple B.P."/>
            <person name="de Bono B."/>
            <person name="Della Gatta G."/>
            <person name="di Bernardo D."/>
            <person name="Down T."/>
            <person name="Engstrom P."/>
            <person name="Fagiolini M."/>
            <person name="Faulkner G."/>
            <person name="Fletcher C.F."/>
            <person name="Fukushima T."/>
            <person name="Furuno M."/>
            <person name="Futaki S."/>
            <person name="Gariboldi M."/>
            <person name="Georgii-Hemming P."/>
            <person name="Gingeras T.R."/>
            <person name="Gojobori T."/>
            <person name="Green R.E."/>
            <person name="Gustincich S."/>
            <person name="Harbers M."/>
            <person name="Hayashi Y."/>
            <person name="Hensch T.K."/>
            <person name="Hirokawa N."/>
            <person name="Hill D."/>
            <person name="Huminiecki L."/>
            <person name="Iacono M."/>
            <person name="Ikeo K."/>
            <person name="Iwama A."/>
            <person name="Ishikawa T."/>
            <person name="Jakt M."/>
            <person name="Kanapin A."/>
            <person name="Katoh M."/>
            <person name="Kawasawa Y."/>
            <person name="Kelso J."/>
            <person name="Kitamura H."/>
            <person name="Kitano H."/>
            <person name="Kollias G."/>
            <person name="Krishnan S.P."/>
            <person name="Kruger A."/>
            <person name="Kummerfeld S.K."/>
            <person name="Kurochkin I.V."/>
            <person name="Lareau L.F."/>
            <person name="Lazarevic D."/>
            <person name="Lipovich L."/>
            <person name="Liu J."/>
            <person name="Liuni S."/>
            <person name="McWilliam S."/>
            <person name="Madan Babu M."/>
            <person name="Madera M."/>
            <person name="Marchionni L."/>
            <person name="Matsuda H."/>
            <person name="Matsuzawa S."/>
            <person name="Miki H."/>
            <person name="Mignone F."/>
            <person name="Miyake S."/>
            <person name="Morris K."/>
            <person name="Mottagui-Tabar S."/>
            <person name="Mulder N."/>
            <person name="Nakano N."/>
            <person name="Nakauchi H."/>
            <person name="Ng P."/>
            <person name="Nilsson R."/>
            <person name="Nishiguchi S."/>
            <person name="Nishikawa S."/>
            <person name="Nori F."/>
            <person name="Ohara O."/>
            <person name="Okazaki Y."/>
            <person name="Orlando V."/>
            <person name="Pang K.C."/>
            <person name="Pavan W.J."/>
            <person name="Pavesi G."/>
            <person name="Pesole G."/>
            <person name="Petrovsky N."/>
            <person name="Piazza S."/>
            <person name="Reed J."/>
            <person name="Reid J.F."/>
            <person name="Ring B.Z."/>
            <person name="Ringwald M."/>
            <person name="Rost B."/>
            <person name="Ruan Y."/>
            <person name="Salzberg S.L."/>
            <person name="Sandelin A."/>
            <person name="Schneider C."/>
            <person name="Schoenbach C."/>
            <person name="Sekiguchi K."/>
            <person name="Semple C.A."/>
            <person name="Seno S."/>
            <person name="Sessa L."/>
            <person name="Sheng Y."/>
            <person name="Shibata Y."/>
            <person name="Shimada H."/>
            <person name="Shimada K."/>
            <person name="Silva D."/>
            <person name="Sinclair B."/>
            <person name="Sperling S."/>
            <person name="Stupka E."/>
            <person name="Sugiura K."/>
            <person name="Sultana R."/>
            <person name="Takenaka Y."/>
            <person name="Taki K."/>
            <person name="Tammoja K."/>
            <person name="Tan S.L."/>
            <person name="Tang S."/>
            <person name="Taylor M.S."/>
            <person name="Tegner J."/>
            <person name="Teichmann S.A."/>
            <person name="Ueda H.R."/>
            <person name="van Nimwegen E."/>
            <person name="Verardo R."/>
            <person name="Wei C.L."/>
            <person name="Yagi K."/>
            <person name="Yamanishi H."/>
            <person name="Zabarovsky E."/>
            <person name="Zhu S."/>
            <person name="Zimmer A."/>
            <person name="Hide W."/>
            <person name="Bult C."/>
            <person name="Grimmond S.M."/>
            <person name="Teasdale R.D."/>
            <person name="Liu E.T."/>
            <person name="Brusic V."/>
            <person name="Quackenbush J."/>
            <person name="Wahlestedt C."/>
            <person name="Mattick J.S."/>
            <person name="Hume D.A."/>
            <person name="Kai C."/>
            <person name="Sasaki D."/>
            <person name="Tomaru Y."/>
            <person name="Fukuda S."/>
            <person name="Kanamori-Katayama M."/>
            <person name="Suzuki M."/>
            <person name="Aoki J."/>
            <person name="Arakawa T."/>
            <person name="Iida J."/>
            <person name="Imamura K."/>
            <person name="Itoh M."/>
            <person name="Kato T."/>
            <person name="Kawaji H."/>
            <person name="Kawagashira N."/>
            <person name="Kawashima T."/>
            <person name="Kojima M."/>
            <person name="Kondo S."/>
            <person name="Konno H."/>
            <person name="Nakano K."/>
            <person name="Ninomiya N."/>
            <person name="Nishio T."/>
            <person name="Okada M."/>
            <person name="Plessy C."/>
            <person name="Shibata K."/>
            <person name="Shiraki T."/>
            <person name="Suzuki S."/>
            <person name="Tagami M."/>
            <person name="Waki K."/>
            <person name="Watahiki A."/>
            <person name="Okamura-Oho Y."/>
            <person name="Suzuki H."/>
            <person name="Kawai J."/>
            <person name="Hayashizaki Y."/>
        </authorList>
    </citation>
    <scope>NUCLEOTIDE SEQUENCE [LARGE SCALE MRNA]</scope>
    <source>
        <strain>NOD</strain>
        <tissue>Dendritic cell</tissue>
    </source>
</reference>
<reference key="4">
    <citation type="submission" date="2005-09" db="EMBL/GenBank/DDBJ databases">
        <authorList>
            <person name="Mural R.J."/>
            <person name="Adams M.D."/>
            <person name="Myers E.W."/>
            <person name="Smith H.O."/>
            <person name="Venter J.C."/>
        </authorList>
    </citation>
    <scope>NUCLEOTIDE SEQUENCE [LARGE SCALE GENOMIC DNA]</scope>
</reference>
<reference key="5">
    <citation type="journal article" date="2004" name="Genome Res.">
        <title>The status, quality, and expansion of the NIH full-length cDNA project: the Mammalian Gene Collection (MGC).</title>
        <authorList>
            <consortium name="The MGC Project Team"/>
        </authorList>
    </citation>
    <scope>NUCLEOTIDE SEQUENCE [LARGE SCALE MRNA]</scope>
    <source>
        <strain>C57BL/6J</strain>
        <tissue>Brain</tissue>
        <tissue>Eye</tissue>
    </source>
</reference>
<reference key="6">
    <citation type="journal article" date="1995" name="Cell">
        <title>The anticoagulation factor protein S and its relative, Gas6, are ligands for the Tyro 3/Axl family of receptor tyrosine kinases.</title>
        <authorList>
            <person name="Stitt T.N."/>
            <person name="Conn G."/>
            <person name="Gore M."/>
            <person name="Lai C."/>
            <person name="Bruno J."/>
            <person name="Radziejewski C."/>
            <person name="Mattsson K."/>
            <person name="Fisher J."/>
            <person name="Gies D.R."/>
            <person name="Jones P.F."/>
            <person name="Masiakowski P."/>
            <person name="Ryan T.E."/>
            <person name="Tobkes N.J."/>
            <person name="Chen D.H."/>
            <person name="DiStefano P.S."/>
            <person name="Long G.L."/>
            <person name="Basilico C."/>
            <person name="Goldfarb M.P."/>
            <person name="Lemke G."/>
            <person name="Glass D.J."/>
            <person name="Yancopoulos G.D."/>
        </authorList>
    </citation>
    <scope>INTERACTION WITH LIGAND GAS6</scope>
</reference>
<reference key="7">
    <citation type="journal article" date="2007" name="Cell">
        <title>TAM receptors are pleiotropic inhibitors of the innate immune response.</title>
        <authorList>
            <person name="Rothlin C.V."/>
            <person name="Ghosh S."/>
            <person name="Zuniga E.I."/>
            <person name="Oldstone M.B."/>
            <person name="Lemke G."/>
        </authorList>
    </citation>
    <scope>FUNCTION IN INNATE IMMUNE RESPONSE INHIBITION</scope>
</reference>
<reference key="8">
    <citation type="journal article" date="2010" name="Cell">
        <title>A tissue-specific atlas of mouse protein phosphorylation and expression.</title>
        <authorList>
            <person name="Huttlin E.L."/>
            <person name="Jedrychowski M.P."/>
            <person name="Elias J.E."/>
            <person name="Goswami T."/>
            <person name="Rad R."/>
            <person name="Beausoleil S.A."/>
            <person name="Villen J."/>
            <person name="Haas W."/>
            <person name="Sowa M.E."/>
            <person name="Gygi S.P."/>
        </authorList>
    </citation>
    <scope>IDENTIFICATION BY MASS SPECTROMETRY [LARGE SCALE ANALYSIS]</scope>
    <source>
        <tissue>Lung</tissue>
        <tissue>Spleen</tissue>
        <tissue>Testis</tissue>
    </source>
</reference>
<reference key="9">
    <citation type="journal article" date="2010" name="Endocrinology">
        <title>Sertoli cell-initiated testicular innate immune response through toll-like receptor-3 activation is negatively regulated by Tyro3, Axl, and mer receptors.</title>
        <authorList>
            <person name="Sun B."/>
            <person name="Qi N."/>
            <person name="Shang T."/>
            <person name="Wu H."/>
            <person name="Deng T."/>
            <person name="Han D."/>
        </authorList>
    </citation>
    <scope>FUNCTION IN INNATE IMMUNE RESPONSE INHIBITION</scope>
</reference>
<dbReference type="EC" id="2.7.10.1"/>
<dbReference type="EMBL" id="X63535">
    <property type="protein sequence ID" value="CAA45097.1"/>
    <property type="molecule type" value="mRNA"/>
</dbReference>
<dbReference type="EMBL" id="X59560">
    <property type="protein sequence ID" value="CAA42158.1"/>
    <property type="molecule type" value="Genomic_DNA"/>
</dbReference>
<dbReference type="EMBL" id="AK155567">
    <property type="protein sequence ID" value="BAE33327.1"/>
    <property type="molecule type" value="mRNA"/>
</dbReference>
<dbReference type="EMBL" id="CH466593">
    <property type="protein sequence ID" value="EDL24236.1"/>
    <property type="molecule type" value="Genomic_DNA"/>
</dbReference>
<dbReference type="EMBL" id="BC046618">
    <property type="protein sequence ID" value="AAH46618.1"/>
    <property type="molecule type" value="mRNA"/>
</dbReference>
<dbReference type="EMBL" id="BC050914">
    <property type="protein sequence ID" value="AAH50914.1"/>
    <property type="molecule type" value="mRNA"/>
</dbReference>
<dbReference type="CCDS" id="CCDS20996.1"/>
<dbReference type="PIR" id="S23065">
    <property type="entry name" value="S23065"/>
</dbReference>
<dbReference type="PIR" id="S23251">
    <property type="entry name" value="S23251"/>
</dbReference>
<dbReference type="RefSeq" id="NP_033491.2">
    <property type="nucleotide sequence ID" value="NM_009465.4"/>
</dbReference>
<dbReference type="RefSeq" id="XP_006540052.1">
    <property type="nucleotide sequence ID" value="XM_006539989.5"/>
</dbReference>
<dbReference type="SMR" id="Q00993"/>
<dbReference type="BioGRID" id="204922">
    <property type="interactions" value="22"/>
</dbReference>
<dbReference type="FunCoup" id="Q00993">
    <property type="interactions" value="341"/>
</dbReference>
<dbReference type="IntAct" id="Q00993">
    <property type="interactions" value="2"/>
</dbReference>
<dbReference type="MINT" id="Q00993"/>
<dbReference type="STRING" id="10090.ENSMUSP00000002677"/>
<dbReference type="BindingDB" id="Q00993"/>
<dbReference type="ChEMBL" id="CHEMBL4879451"/>
<dbReference type="GlyCosmos" id="Q00993">
    <property type="glycosylation" value="6 sites, No reported glycans"/>
</dbReference>
<dbReference type="GlyGen" id="Q00993">
    <property type="glycosylation" value="7 sites, 2 N-linked glycans (2 sites)"/>
</dbReference>
<dbReference type="iPTMnet" id="Q00993"/>
<dbReference type="PhosphoSitePlus" id="Q00993"/>
<dbReference type="SwissPalm" id="Q00993"/>
<dbReference type="jPOST" id="Q00993"/>
<dbReference type="PaxDb" id="10090-ENSMUSP00000002677"/>
<dbReference type="PeptideAtlas" id="Q00993"/>
<dbReference type="ProteomicsDB" id="298194"/>
<dbReference type="Pumba" id="Q00993"/>
<dbReference type="ABCD" id="Q00993">
    <property type="antibodies" value="22 sequenced antibodies"/>
</dbReference>
<dbReference type="Antibodypedia" id="30709">
    <property type="antibodies" value="1296 antibodies from 45 providers"/>
</dbReference>
<dbReference type="DNASU" id="26362"/>
<dbReference type="Ensembl" id="ENSMUST00000002677.11">
    <property type="protein sequence ID" value="ENSMUSP00000002677.5"/>
    <property type="gene ID" value="ENSMUSG00000002602.17"/>
</dbReference>
<dbReference type="GeneID" id="26362"/>
<dbReference type="KEGG" id="mmu:26362"/>
<dbReference type="UCSC" id="uc009ftx.2">
    <property type="organism name" value="mouse"/>
</dbReference>
<dbReference type="AGR" id="MGI:1347244"/>
<dbReference type="CTD" id="558"/>
<dbReference type="MGI" id="MGI:1347244">
    <property type="gene designation" value="Axl"/>
</dbReference>
<dbReference type="VEuPathDB" id="HostDB:ENSMUSG00000002602"/>
<dbReference type="eggNOG" id="ENOG502QQQ3">
    <property type="taxonomic scope" value="Eukaryota"/>
</dbReference>
<dbReference type="GeneTree" id="ENSGT00940000160232"/>
<dbReference type="InParanoid" id="Q00993"/>
<dbReference type="OMA" id="WTIMSTL"/>
<dbReference type="OrthoDB" id="4062651at2759"/>
<dbReference type="PhylomeDB" id="Q00993"/>
<dbReference type="TreeFam" id="TF317402"/>
<dbReference type="BRENDA" id="2.7.10.1">
    <property type="organism ID" value="3474"/>
</dbReference>
<dbReference type="Reactome" id="R-MMU-4420097">
    <property type="pathway name" value="VEGFA-VEGFR2 Pathway"/>
</dbReference>
<dbReference type="BioGRID-ORCS" id="26362">
    <property type="hits" value="1 hit in 78 CRISPR screens"/>
</dbReference>
<dbReference type="ChiTaRS" id="Axl">
    <property type="organism name" value="mouse"/>
</dbReference>
<dbReference type="PRO" id="PR:Q00993"/>
<dbReference type="Proteomes" id="UP000000589">
    <property type="component" value="Chromosome 7"/>
</dbReference>
<dbReference type="RNAct" id="Q00993">
    <property type="molecule type" value="protein"/>
</dbReference>
<dbReference type="Bgee" id="ENSMUSG00000002602">
    <property type="expression patterns" value="Expressed in gonadal ridge and 224 other cell types or tissues"/>
</dbReference>
<dbReference type="ExpressionAtlas" id="Q00993">
    <property type="expression patterns" value="baseline and differential"/>
</dbReference>
<dbReference type="GO" id="GO:0015629">
    <property type="term" value="C:actin cytoskeleton"/>
    <property type="evidence" value="ECO:0007669"/>
    <property type="project" value="Ensembl"/>
</dbReference>
<dbReference type="GO" id="GO:0009986">
    <property type="term" value="C:cell surface"/>
    <property type="evidence" value="ECO:0007669"/>
    <property type="project" value="Ensembl"/>
</dbReference>
<dbReference type="GO" id="GO:0005615">
    <property type="term" value="C:extracellular space"/>
    <property type="evidence" value="ECO:0007669"/>
    <property type="project" value="Ensembl"/>
</dbReference>
<dbReference type="GO" id="GO:0043231">
    <property type="term" value="C:intracellular membrane-bounded organelle"/>
    <property type="evidence" value="ECO:0007669"/>
    <property type="project" value="Ensembl"/>
</dbReference>
<dbReference type="GO" id="GO:0005886">
    <property type="term" value="C:plasma membrane"/>
    <property type="evidence" value="ECO:0007669"/>
    <property type="project" value="UniProtKB-SubCell"/>
</dbReference>
<dbReference type="GO" id="GO:0005524">
    <property type="term" value="F:ATP binding"/>
    <property type="evidence" value="ECO:0007669"/>
    <property type="project" value="UniProtKB-KW"/>
</dbReference>
<dbReference type="GO" id="GO:0001786">
    <property type="term" value="F:phosphatidylserine binding"/>
    <property type="evidence" value="ECO:0007669"/>
    <property type="project" value="Ensembl"/>
</dbReference>
<dbReference type="GO" id="GO:0004714">
    <property type="term" value="F:transmembrane receptor protein tyrosine kinase activity"/>
    <property type="evidence" value="ECO:0007669"/>
    <property type="project" value="UniProtKB-EC"/>
</dbReference>
<dbReference type="GO" id="GO:0001618">
    <property type="term" value="F:virus receptor activity"/>
    <property type="evidence" value="ECO:0007669"/>
    <property type="project" value="Ensembl"/>
</dbReference>
<dbReference type="GO" id="GO:0043277">
    <property type="term" value="P:apoptotic cell clearance"/>
    <property type="evidence" value="ECO:0000315"/>
    <property type="project" value="MGI"/>
</dbReference>
<dbReference type="GO" id="GO:0006915">
    <property type="term" value="P:apoptotic process"/>
    <property type="evidence" value="ECO:0000315"/>
    <property type="project" value="MGI"/>
</dbReference>
<dbReference type="GO" id="GO:0001974">
    <property type="term" value="P:blood vessel remodeling"/>
    <property type="evidence" value="ECO:0000315"/>
    <property type="project" value="MGI"/>
</dbReference>
<dbReference type="GO" id="GO:0048469">
    <property type="term" value="P:cell maturation"/>
    <property type="evidence" value="ECO:0007669"/>
    <property type="project" value="Ensembl"/>
</dbReference>
<dbReference type="GO" id="GO:0035457">
    <property type="term" value="P:cellular response to interferon-alpha"/>
    <property type="evidence" value="ECO:0007669"/>
    <property type="project" value="Ensembl"/>
</dbReference>
<dbReference type="GO" id="GO:0071222">
    <property type="term" value="P:cellular response to lipopolysaccharide"/>
    <property type="evidence" value="ECO:0007669"/>
    <property type="project" value="Ensembl"/>
</dbReference>
<dbReference type="GO" id="GO:0097028">
    <property type="term" value="P:dendritic cell differentiation"/>
    <property type="evidence" value="ECO:0007669"/>
    <property type="project" value="Ensembl"/>
</dbReference>
<dbReference type="GO" id="GO:0007167">
    <property type="term" value="P:enzyme-linked receptor protein signaling pathway"/>
    <property type="evidence" value="ECO:0000316"/>
    <property type="project" value="MGI"/>
</dbReference>
<dbReference type="GO" id="GO:0034101">
    <property type="term" value="P:erythrocyte homeostasis"/>
    <property type="evidence" value="ECO:0000315"/>
    <property type="project" value="MGI"/>
</dbReference>
<dbReference type="GO" id="GO:0051649">
    <property type="term" value="P:establishment of localization in cell"/>
    <property type="evidence" value="ECO:0000315"/>
    <property type="project" value="MGI"/>
</dbReference>
<dbReference type="GO" id="GO:0021885">
    <property type="term" value="P:forebrain cell migration"/>
    <property type="evidence" value="ECO:0000316"/>
    <property type="project" value="MGI"/>
</dbReference>
<dbReference type="GO" id="GO:0006954">
    <property type="term" value="P:inflammatory response"/>
    <property type="evidence" value="ECO:0000315"/>
    <property type="project" value="MGI"/>
</dbReference>
<dbReference type="GO" id="GO:0045087">
    <property type="term" value="P:innate immune response"/>
    <property type="evidence" value="ECO:0007669"/>
    <property type="project" value="UniProtKB-KW"/>
</dbReference>
<dbReference type="GO" id="GO:0046649">
    <property type="term" value="P:lymphocyte activation"/>
    <property type="evidence" value="ECO:0000316"/>
    <property type="project" value="MGI"/>
</dbReference>
<dbReference type="GO" id="GO:0001779">
    <property type="term" value="P:natural killer cell differentiation"/>
    <property type="evidence" value="ECO:0000316"/>
    <property type="project" value="MGI"/>
</dbReference>
<dbReference type="GO" id="GO:0043066">
    <property type="term" value="P:negative regulation of apoptotic process"/>
    <property type="evidence" value="ECO:0000315"/>
    <property type="project" value="UniProtKB"/>
</dbReference>
<dbReference type="GO" id="GO:0001818">
    <property type="term" value="P:negative regulation of cytokine production"/>
    <property type="evidence" value="ECO:0000316"/>
    <property type="project" value="MGI"/>
</dbReference>
<dbReference type="GO" id="GO:2000669">
    <property type="term" value="P:negative regulation of dendritic cell apoptotic process"/>
    <property type="evidence" value="ECO:0007669"/>
    <property type="project" value="Ensembl"/>
</dbReference>
<dbReference type="GO" id="GO:0051250">
    <property type="term" value="P:negative regulation of lymphocyte activation"/>
    <property type="evidence" value="ECO:0000316"/>
    <property type="project" value="MGI"/>
</dbReference>
<dbReference type="GO" id="GO:0010936">
    <property type="term" value="P:negative regulation of macrophage cytokine production"/>
    <property type="evidence" value="ECO:0000316"/>
    <property type="project" value="MGI"/>
</dbReference>
<dbReference type="GO" id="GO:0043524">
    <property type="term" value="P:negative regulation of neuron apoptotic process"/>
    <property type="evidence" value="ECO:0000315"/>
    <property type="project" value="MGI"/>
</dbReference>
<dbReference type="GO" id="GO:0032720">
    <property type="term" value="P:negative regulation of tumor necrosis factor production"/>
    <property type="evidence" value="ECO:0000316"/>
    <property type="project" value="MGI"/>
</dbReference>
<dbReference type="GO" id="GO:0032689">
    <property type="term" value="P:negative regulation of type II interferon production"/>
    <property type="evidence" value="ECO:0007669"/>
    <property type="project" value="Ensembl"/>
</dbReference>
<dbReference type="GO" id="GO:0051402">
    <property type="term" value="P:neuron apoptotic process"/>
    <property type="evidence" value="ECO:0000316"/>
    <property type="project" value="MGI"/>
</dbReference>
<dbReference type="GO" id="GO:0001764">
    <property type="term" value="P:neuron migration"/>
    <property type="evidence" value="ECO:0000315"/>
    <property type="project" value="MGI"/>
</dbReference>
<dbReference type="GO" id="GO:0097350">
    <property type="term" value="P:neutrophil clearance"/>
    <property type="evidence" value="ECO:0000316"/>
    <property type="project" value="MGI"/>
</dbReference>
<dbReference type="GO" id="GO:0042698">
    <property type="term" value="P:ovulation cycle"/>
    <property type="evidence" value="ECO:0000316"/>
    <property type="project" value="MGI"/>
</dbReference>
<dbReference type="GO" id="GO:0006909">
    <property type="term" value="P:phagocytosis"/>
    <property type="evidence" value="ECO:0000316"/>
    <property type="project" value="MGI"/>
</dbReference>
<dbReference type="GO" id="GO:0030168">
    <property type="term" value="P:platelet activation"/>
    <property type="evidence" value="ECO:0000315"/>
    <property type="project" value="MGI"/>
</dbReference>
<dbReference type="GO" id="GO:0001961">
    <property type="term" value="P:positive regulation of cytokine-mediated signaling pathway"/>
    <property type="evidence" value="ECO:0007669"/>
    <property type="project" value="Ensembl"/>
</dbReference>
<dbReference type="GO" id="GO:0032825">
    <property type="term" value="P:positive regulation of natural killer cell differentiation"/>
    <property type="evidence" value="ECO:0007669"/>
    <property type="project" value="Ensembl"/>
</dbReference>
<dbReference type="GO" id="GO:0051897">
    <property type="term" value="P:positive regulation of phosphatidylinositol 3-kinase/protein kinase B signal transduction"/>
    <property type="evidence" value="ECO:0000315"/>
    <property type="project" value="UniProtKB"/>
</dbReference>
<dbReference type="GO" id="GO:0048549">
    <property type="term" value="P:positive regulation of pinocytosis"/>
    <property type="evidence" value="ECO:0007669"/>
    <property type="project" value="Ensembl"/>
</dbReference>
<dbReference type="GO" id="GO:1903902">
    <property type="term" value="P:positive regulation of viral life cycle"/>
    <property type="evidence" value="ECO:0007669"/>
    <property type="project" value="Ensembl"/>
</dbReference>
<dbReference type="GO" id="GO:0032940">
    <property type="term" value="P:secretion by cell"/>
    <property type="evidence" value="ECO:0000315"/>
    <property type="project" value="MGI"/>
</dbReference>
<dbReference type="GO" id="GO:0007283">
    <property type="term" value="P:spermatogenesis"/>
    <property type="evidence" value="ECO:0000316"/>
    <property type="project" value="MGI"/>
</dbReference>
<dbReference type="GO" id="GO:0034446">
    <property type="term" value="P:substrate adhesion-dependent cell spreading"/>
    <property type="evidence" value="ECO:0000315"/>
    <property type="project" value="MGI"/>
</dbReference>
<dbReference type="GO" id="GO:0060068">
    <property type="term" value="P:vagina development"/>
    <property type="evidence" value="ECO:0000316"/>
    <property type="project" value="MGI"/>
</dbReference>
<dbReference type="CDD" id="cd00063">
    <property type="entry name" value="FN3"/>
    <property type="match status" value="2"/>
</dbReference>
<dbReference type="CDD" id="cd05075">
    <property type="entry name" value="PTKc_Axl"/>
    <property type="match status" value="1"/>
</dbReference>
<dbReference type="FunFam" id="2.60.40.10:FF:000865">
    <property type="entry name" value="AXL receptor tyrosine kinase"/>
    <property type="match status" value="1"/>
</dbReference>
<dbReference type="FunFam" id="1.10.510.10:FF:000089">
    <property type="entry name" value="Tyrosine-protein kinase receptor TYRO3"/>
    <property type="match status" value="1"/>
</dbReference>
<dbReference type="FunFam" id="2.60.40.10:FF:000662">
    <property type="entry name" value="Tyrosine-protein kinase receptor UFO"/>
    <property type="match status" value="1"/>
</dbReference>
<dbReference type="FunFam" id="2.60.40.10:FF:000810">
    <property type="entry name" value="Tyrosine-protein kinase receptor UFO"/>
    <property type="match status" value="1"/>
</dbReference>
<dbReference type="FunFam" id="3.30.200.20:FF:000509">
    <property type="entry name" value="Tyrosine-protein kinase receptor UFO"/>
    <property type="match status" value="1"/>
</dbReference>
<dbReference type="FunFam" id="2.60.40.10:FF:000696">
    <property type="entry name" value="tyrosine-protein kinase receptor UFO isoform X1"/>
    <property type="match status" value="1"/>
</dbReference>
<dbReference type="Gene3D" id="2.60.40.10">
    <property type="entry name" value="Immunoglobulins"/>
    <property type="match status" value="4"/>
</dbReference>
<dbReference type="Gene3D" id="3.30.200.20">
    <property type="entry name" value="Phosphorylase Kinase, domain 1"/>
    <property type="match status" value="1"/>
</dbReference>
<dbReference type="Gene3D" id="1.10.510.10">
    <property type="entry name" value="Transferase(Phosphotransferase) domain 1"/>
    <property type="match status" value="1"/>
</dbReference>
<dbReference type="InterPro" id="IPR003961">
    <property type="entry name" value="FN3_dom"/>
</dbReference>
<dbReference type="InterPro" id="IPR036116">
    <property type="entry name" value="FN3_sf"/>
</dbReference>
<dbReference type="InterPro" id="IPR007110">
    <property type="entry name" value="Ig-like_dom"/>
</dbReference>
<dbReference type="InterPro" id="IPR036179">
    <property type="entry name" value="Ig-like_dom_sf"/>
</dbReference>
<dbReference type="InterPro" id="IPR013783">
    <property type="entry name" value="Ig-like_fold"/>
</dbReference>
<dbReference type="InterPro" id="IPR003599">
    <property type="entry name" value="Ig_sub"/>
</dbReference>
<dbReference type="InterPro" id="IPR011009">
    <property type="entry name" value="Kinase-like_dom_sf"/>
</dbReference>
<dbReference type="InterPro" id="IPR000719">
    <property type="entry name" value="Prot_kinase_dom"/>
</dbReference>
<dbReference type="InterPro" id="IPR017441">
    <property type="entry name" value="Protein_kinase_ATP_BS"/>
</dbReference>
<dbReference type="InterPro" id="IPR050122">
    <property type="entry name" value="RTK"/>
</dbReference>
<dbReference type="InterPro" id="IPR001245">
    <property type="entry name" value="Ser-Thr/Tyr_kinase_cat_dom"/>
</dbReference>
<dbReference type="InterPro" id="IPR008266">
    <property type="entry name" value="Tyr_kinase_AS"/>
</dbReference>
<dbReference type="InterPro" id="IPR020635">
    <property type="entry name" value="Tyr_kinase_cat_dom"/>
</dbReference>
<dbReference type="PANTHER" id="PTHR24416">
    <property type="entry name" value="TYROSINE-PROTEIN KINASE RECEPTOR"/>
    <property type="match status" value="1"/>
</dbReference>
<dbReference type="PANTHER" id="PTHR24416:SF323">
    <property type="entry name" value="TYROSINE-PROTEIN KINASE RECEPTOR UFO"/>
    <property type="match status" value="1"/>
</dbReference>
<dbReference type="Pfam" id="PF00041">
    <property type="entry name" value="fn3"/>
    <property type="match status" value="2"/>
</dbReference>
<dbReference type="Pfam" id="PF13895">
    <property type="entry name" value="Ig_2"/>
    <property type="match status" value="1"/>
</dbReference>
<dbReference type="Pfam" id="PF13927">
    <property type="entry name" value="Ig_3"/>
    <property type="match status" value="1"/>
</dbReference>
<dbReference type="Pfam" id="PF07714">
    <property type="entry name" value="PK_Tyr_Ser-Thr"/>
    <property type="match status" value="1"/>
</dbReference>
<dbReference type="PIRSF" id="PIRSF000615">
    <property type="entry name" value="TyrPK_CSF1-R"/>
    <property type="match status" value="1"/>
</dbReference>
<dbReference type="PRINTS" id="PR00109">
    <property type="entry name" value="TYRKINASE"/>
</dbReference>
<dbReference type="SMART" id="SM00060">
    <property type="entry name" value="FN3"/>
    <property type="match status" value="2"/>
</dbReference>
<dbReference type="SMART" id="SM00409">
    <property type="entry name" value="IG"/>
    <property type="match status" value="2"/>
</dbReference>
<dbReference type="SMART" id="SM00219">
    <property type="entry name" value="TyrKc"/>
    <property type="match status" value="1"/>
</dbReference>
<dbReference type="SUPFAM" id="SSF49265">
    <property type="entry name" value="Fibronectin type III"/>
    <property type="match status" value="1"/>
</dbReference>
<dbReference type="SUPFAM" id="SSF48726">
    <property type="entry name" value="Immunoglobulin"/>
    <property type="match status" value="2"/>
</dbReference>
<dbReference type="SUPFAM" id="SSF56112">
    <property type="entry name" value="Protein kinase-like (PK-like)"/>
    <property type="match status" value="1"/>
</dbReference>
<dbReference type="PROSITE" id="PS50853">
    <property type="entry name" value="FN3"/>
    <property type="match status" value="2"/>
</dbReference>
<dbReference type="PROSITE" id="PS50835">
    <property type="entry name" value="IG_LIKE"/>
    <property type="match status" value="2"/>
</dbReference>
<dbReference type="PROSITE" id="PS00107">
    <property type="entry name" value="PROTEIN_KINASE_ATP"/>
    <property type="match status" value="1"/>
</dbReference>
<dbReference type="PROSITE" id="PS50011">
    <property type="entry name" value="PROTEIN_KINASE_DOM"/>
    <property type="match status" value="1"/>
</dbReference>
<dbReference type="PROSITE" id="PS00109">
    <property type="entry name" value="PROTEIN_KINASE_TYR"/>
    <property type="match status" value="1"/>
</dbReference>
<sequence length="888" mass="98191">MGRVPLAWWLALCCWGCAAHKDTQTEAGSPFVGNPGNITGARGLTGTLRCELQVQGEPPEVVWLRDGQILELADNTQTQVPLGEDWQDEWKVVSQLRISALQLSDAGEYQCMVHLEGRTFVSQPGFVGLEGLPYFLEEPEDKAVPANTPFNLSCQAQGPPEPVTLLWLQDAVPLAPVTGHSSQHSLQTPGLNKTSSFSCEAHNAKGVTTSRTATITVLPQRPHHLHVVSRQPTELEVAWTPGLSGIYPLTHCNLQAVLSDDGVGIWLGKSDPPEDPLTLQVSVPPHQLRLEKLLPHTPYHIRISCSSSQGPSPWTHWLPVETTEGVPLGPPENVSAMRNGSQVLVRWQEPRVPLQGTLLGYRLAYRGQDTPEVLMDIGLTREVTLELRGDRPVANLTVSVTAYTSAGDGPWSLPVPLEPWRPGQGQPLHHLVSEPPPRAFSWPWWYVLLGALVAAACVLILALFLVHRRKKETRYGEVFEPTVERGELVVRYRVRKSYSRRTTEATLNSLGISEELKEKLRDVMVDRHKVALGKTLGEGEFGAVMEGQLNQDDSILKVAVKTMKIAICTRSELEDFLSEAVCMKEFDHPNVMRLIGVCFQGSDREGFPEPVVILPFMKHGDLHSFLLYSRLGDQPVFLPTQMLVKFMADIASGMEYLSTKRFIHRDLAARNCMLNENMSVCVADFGLSKKIYNGDYYRQGRIAKMPVKWIAIESLADRVYTSKSDVWSFGVTMWEIATRGQTPYPGVENSEIYDYLRQGNRLKQPVDCLDGLYALMSRCWELNPRDRPSFAELREDLENTLKALPPAQEPDEILYVNMDEGGSHLEPRGAAGGADPPTQPDPKDSCSCLTAADVHSAGRYVLCPSTAPGPTLSADRGCPAPPGQEDGA</sequence>
<comment type="function">
    <text evidence="9 10">Receptor tyrosine kinase that transduces signals from the extracellular matrix into the cytoplasm by binding growth factor GAS6 and which is thus regulating many physiological processes including cell survival, cell proliferation, migration and differentiation. Ligand binding at the cell surface induces dimerization and autophosphorylation of AXL. Following activation by ligand, AXL binds and induces tyrosine phosphorylation of PI3-kinase subunits PIK3R1, PIK3R2 and PIK3R3; but also GRB2, PLCG1, LCK and PTPN11. Other downstream substrate candidates for AXL are CBL, NCK2, SOCS1 and TNS2. Recruitment of GRB2 and phosphatidylinositol 3 kinase regulatory subunits by AXL leads to the downstream activation of the AKT kinase. GAS6/AXL signaling plays a role in various processes such as endothelial cell survival during acidification by preventing apoptosis, optimal cytokine signaling during human natural killer cell development, hepatic regeneration, gonadotropin-releasing hormone neuron survival and migration, platelet activation, or regulation of thrombotic responses. Also plays an important role in inhibition of Toll-like receptors (TLRs)-mediated innate immune response.</text>
</comment>
<comment type="catalytic activity">
    <reaction evidence="7">
        <text>L-tyrosyl-[protein] + ATP = O-phospho-L-tyrosyl-[protein] + ADP + H(+)</text>
        <dbReference type="Rhea" id="RHEA:10596"/>
        <dbReference type="Rhea" id="RHEA-COMP:10136"/>
        <dbReference type="Rhea" id="RHEA-COMP:20101"/>
        <dbReference type="ChEBI" id="CHEBI:15378"/>
        <dbReference type="ChEBI" id="CHEBI:30616"/>
        <dbReference type="ChEBI" id="CHEBI:46858"/>
        <dbReference type="ChEBI" id="CHEBI:61978"/>
        <dbReference type="ChEBI" id="CHEBI:456216"/>
        <dbReference type="EC" id="2.7.10.1"/>
    </reaction>
</comment>
<comment type="activity regulation">
    <text evidence="1">Activated by GAS6-binding and subsequent autophosphorylation.</text>
</comment>
<comment type="subunit">
    <text evidence="1">Heterodimer and heterotetramer with ligand GAS6 (By similarity). Interacts with CBL, GRB2, LCK, NCK2, PIK3R1, PIK3R2, PIK3R3, PLCG1, SOCS1 and TNS2. Part of a complex including AXL, TNK2 and GRB2, in which GRB2 promotes AXL recruitment by TNK2 (By similarity).</text>
</comment>
<comment type="subcellular location">
    <subcellularLocation>
        <location evidence="1">Cell membrane</location>
        <topology evidence="1">Single-pass type I membrane protein</topology>
    </subcellularLocation>
</comment>
<comment type="tissue specificity">
    <text>In distinct substructures of a broad spectrum of developing tissues (in the late embryogenesis). In cells forming organ capsules as well as in connective tissue structures (in adult).</text>
</comment>
<comment type="PTM">
    <text evidence="1">Monoubiquitinated upon GAS6-binding. A very small proportion of the receptor could be subjected to polyubiquitination in a very transient fashion (By similarity).</text>
</comment>
<comment type="PTM">
    <text evidence="1">Phosphorylated at tyrosine residues by autocatalysis, which activates kinase activity.</text>
</comment>
<comment type="similarity">
    <text evidence="5">Belongs to the protein kinase superfamily. Tyr protein kinase family. AXL/UFO subfamily.</text>
</comment>
<name>UFO_MOUSE</name>
<keyword id="KW-0067">ATP-binding</keyword>
<keyword id="KW-1003">Cell membrane</keyword>
<keyword id="KW-0221">Differentiation</keyword>
<keyword id="KW-1015">Disulfide bond</keyword>
<keyword id="KW-0325">Glycoprotein</keyword>
<keyword id="KW-0391">Immunity</keyword>
<keyword id="KW-0393">Immunoglobulin domain</keyword>
<keyword id="KW-0399">Innate immunity</keyword>
<keyword id="KW-0418">Kinase</keyword>
<keyword id="KW-0472">Membrane</keyword>
<keyword id="KW-0547">Nucleotide-binding</keyword>
<keyword id="KW-0553">Oncogene</keyword>
<keyword id="KW-0597">Phosphoprotein</keyword>
<keyword id="KW-0675">Receptor</keyword>
<keyword id="KW-1185">Reference proteome</keyword>
<keyword id="KW-0677">Repeat</keyword>
<keyword id="KW-0732">Signal</keyword>
<keyword id="KW-0808">Transferase</keyword>
<keyword id="KW-0812">Transmembrane</keyword>
<keyword id="KW-1133">Transmembrane helix</keyword>
<keyword id="KW-0829">Tyrosine-protein kinase</keyword>
<keyword id="KW-0832">Ubl conjugation</keyword>
<protein>
    <recommendedName>
        <fullName>Tyrosine-protein kinase receptor UFO</fullName>
        <ecNumber>2.7.10.1</ecNumber>
    </recommendedName>
    <alternativeName>
        <fullName>Adhesion-related kinase</fullName>
    </alternativeName>
</protein>